<gene>
    <name evidence="1" type="primary">nrdR</name>
    <name type="ordered locus">RPA2725</name>
</gene>
<accession>Q6N692</accession>
<proteinExistence type="inferred from homology"/>
<comment type="function">
    <text evidence="1">Negatively regulates transcription of bacterial ribonucleotide reductase nrd genes and operons by binding to NrdR-boxes.</text>
</comment>
<comment type="cofactor">
    <cofactor evidence="1">
        <name>Zn(2+)</name>
        <dbReference type="ChEBI" id="CHEBI:29105"/>
    </cofactor>
    <text evidence="1">Binds 1 zinc ion.</text>
</comment>
<comment type="similarity">
    <text evidence="1">Belongs to the NrdR family.</text>
</comment>
<reference key="1">
    <citation type="journal article" date="2004" name="Nat. Biotechnol.">
        <title>Complete genome sequence of the metabolically versatile photosynthetic bacterium Rhodopseudomonas palustris.</title>
        <authorList>
            <person name="Larimer F.W."/>
            <person name="Chain P."/>
            <person name="Hauser L."/>
            <person name="Lamerdin J.E."/>
            <person name="Malfatti S."/>
            <person name="Do L."/>
            <person name="Land M.L."/>
            <person name="Pelletier D.A."/>
            <person name="Beatty J.T."/>
            <person name="Lang A.S."/>
            <person name="Tabita F.R."/>
            <person name="Gibson J.L."/>
            <person name="Hanson T.E."/>
            <person name="Bobst C."/>
            <person name="Torres y Torres J.L."/>
            <person name="Peres C."/>
            <person name="Harrison F.H."/>
            <person name="Gibson J."/>
            <person name="Harwood C.S."/>
        </authorList>
    </citation>
    <scope>NUCLEOTIDE SEQUENCE [LARGE SCALE GENOMIC DNA]</scope>
    <source>
        <strain>ATCC BAA-98 / CGA009</strain>
    </source>
</reference>
<feature type="chain" id="PRO_0000182341" description="Transcriptional repressor NrdR">
    <location>
        <begin position="1"/>
        <end position="160"/>
    </location>
</feature>
<feature type="domain" description="ATP-cone" evidence="1">
    <location>
        <begin position="49"/>
        <end position="139"/>
    </location>
</feature>
<feature type="zinc finger region" evidence="1">
    <location>
        <begin position="3"/>
        <end position="34"/>
    </location>
</feature>
<feature type="region of interest" description="Disordered" evidence="2">
    <location>
        <begin position="1"/>
        <end position="20"/>
    </location>
</feature>
<feature type="compositionally biased region" description="Polar residues" evidence="2">
    <location>
        <begin position="1"/>
        <end position="11"/>
    </location>
</feature>
<name>NRDR_RHOPA</name>
<protein>
    <recommendedName>
        <fullName evidence="1">Transcriptional repressor NrdR</fullName>
    </recommendedName>
</protein>
<keyword id="KW-0067">ATP-binding</keyword>
<keyword id="KW-0238">DNA-binding</keyword>
<keyword id="KW-0479">Metal-binding</keyword>
<keyword id="KW-0547">Nucleotide-binding</keyword>
<keyword id="KW-0678">Repressor</keyword>
<keyword id="KW-0804">Transcription</keyword>
<keyword id="KW-0805">Transcription regulation</keyword>
<keyword id="KW-0862">Zinc</keyword>
<keyword id="KW-0863">Zinc-finger</keyword>
<dbReference type="EMBL" id="BX572601">
    <property type="protein sequence ID" value="CAE28167.1"/>
    <property type="molecule type" value="Genomic_DNA"/>
</dbReference>
<dbReference type="RefSeq" id="WP_011158276.1">
    <property type="nucleotide sequence ID" value="NZ_CP116810.1"/>
</dbReference>
<dbReference type="SMR" id="Q6N692"/>
<dbReference type="STRING" id="258594.RPA2725"/>
<dbReference type="GeneID" id="66893801"/>
<dbReference type="eggNOG" id="COG1327">
    <property type="taxonomic scope" value="Bacteria"/>
</dbReference>
<dbReference type="HOGENOM" id="CLU_108412_0_1_5"/>
<dbReference type="PhylomeDB" id="Q6N692"/>
<dbReference type="GO" id="GO:0005524">
    <property type="term" value="F:ATP binding"/>
    <property type="evidence" value="ECO:0007669"/>
    <property type="project" value="UniProtKB-KW"/>
</dbReference>
<dbReference type="GO" id="GO:0003677">
    <property type="term" value="F:DNA binding"/>
    <property type="evidence" value="ECO:0007669"/>
    <property type="project" value="UniProtKB-KW"/>
</dbReference>
<dbReference type="GO" id="GO:0008270">
    <property type="term" value="F:zinc ion binding"/>
    <property type="evidence" value="ECO:0007669"/>
    <property type="project" value="UniProtKB-UniRule"/>
</dbReference>
<dbReference type="GO" id="GO:0045892">
    <property type="term" value="P:negative regulation of DNA-templated transcription"/>
    <property type="evidence" value="ECO:0007669"/>
    <property type="project" value="UniProtKB-UniRule"/>
</dbReference>
<dbReference type="HAMAP" id="MF_00440">
    <property type="entry name" value="NrdR"/>
    <property type="match status" value="1"/>
</dbReference>
<dbReference type="InterPro" id="IPR005144">
    <property type="entry name" value="ATP-cone_dom"/>
</dbReference>
<dbReference type="InterPro" id="IPR055173">
    <property type="entry name" value="NrdR-like_N"/>
</dbReference>
<dbReference type="InterPro" id="IPR003796">
    <property type="entry name" value="RNR_NrdR-like"/>
</dbReference>
<dbReference type="NCBIfam" id="TIGR00244">
    <property type="entry name" value="transcriptional regulator NrdR"/>
    <property type="match status" value="1"/>
</dbReference>
<dbReference type="PANTHER" id="PTHR30455">
    <property type="entry name" value="TRANSCRIPTIONAL REPRESSOR NRDR"/>
    <property type="match status" value="1"/>
</dbReference>
<dbReference type="PANTHER" id="PTHR30455:SF2">
    <property type="entry name" value="TRANSCRIPTIONAL REPRESSOR NRDR"/>
    <property type="match status" value="1"/>
</dbReference>
<dbReference type="Pfam" id="PF03477">
    <property type="entry name" value="ATP-cone"/>
    <property type="match status" value="1"/>
</dbReference>
<dbReference type="Pfam" id="PF22811">
    <property type="entry name" value="Zn_ribbon_NrdR"/>
    <property type="match status" value="1"/>
</dbReference>
<dbReference type="PROSITE" id="PS51161">
    <property type="entry name" value="ATP_CONE"/>
    <property type="match status" value="1"/>
</dbReference>
<organism>
    <name type="scientific">Rhodopseudomonas palustris (strain ATCC BAA-98 / CGA009)</name>
    <dbReference type="NCBI Taxonomy" id="258594"/>
    <lineage>
        <taxon>Bacteria</taxon>
        <taxon>Pseudomonadati</taxon>
        <taxon>Pseudomonadota</taxon>
        <taxon>Alphaproteobacteria</taxon>
        <taxon>Hyphomicrobiales</taxon>
        <taxon>Nitrobacteraceae</taxon>
        <taxon>Rhodopseudomonas</taxon>
    </lineage>
</organism>
<sequence length="160" mass="18601">MRCPNCNSLDTQVKDSRPTEDSSVIRRRRVCIACNFRFTTFERVQLRELIVIKRNGRRVPFDRDKLMRSVQISLRKRPVDPERVEQMVSAIVRELESGGEAEISSETIGESVMDHLRKLDDVAYVRFASVYRNFREAKDFEAVLGELSHEDEARAALVRK</sequence>
<evidence type="ECO:0000255" key="1">
    <source>
        <dbReference type="HAMAP-Rule" id="MF_00440"/>
    </source>
</evidence>
<evidence type="ECO:0000256" key="2">
    <source>
        <dbReference type="SAM" id="MobiDB-lite"/>
    </source>
</evidence>